<comment type="similarity">
    <text evidence="1">Belongs to the UPF0306 family.</text>
</comment>
<name>YHBP_ECO5E</name>
<organism>
    <name type="scientific">Escherichia coli O157:H7 (strain EC4115 / EHEC)</name>
    <dbReference type="NCBI Taxonomy" id="444450"/>
    <lineage>
        <taxon>Bacteria</taxon>
        <taxon>Pseudomonadati</taxon>
        <taxon>Pseudomonadota</taxon>
        <taxon>Gammaproteobacteria</taxon>
        <taxon>Enterobacterales</taxon>
        <taxon>Enterobacteriaceae</taxon>
        <taxon>Escherichia</taxon>
    </lineage>
</organism>
<evidence type="ECO:0000255" key="1">
    <source>
        <dbReference type="HAMAP-Rule" id="MF_00764"/>
    </source>
</evidence>
<protein>
    <recommendedName>
        <fullName evidence="1">UPF0306 protein YhbP</fullName>
    </recommendedName>
</protein>
<proteinExistence type="inferred from homology"/>
<feature type="chain" id="PRO_1000198354" description="UPF0306 protein YhbP">
    <location>
        <begin position="1"/>
        <end position="147"/>
    </location>
</feature>
<sequence length="147" mass="16787">METLTAISRWLAKQHVVTWCVQQEGELWCANAFYLFDVQKVAFYILTEEKTRHAQMRGPQAAVAGTVNGQPKTVALIRGVQFKGEIRRLEGEESDLARKAYNRRFPVARMLSAPVWEIRPDEIKFTDNTLGFGKKMIWLRGSGTEQA</sequence>
<reference key="1">
    <citation type="journal article" date="2011" name="Proc. Natl. Acad. Sci. U.S.A.">
        <title>Genomic anatomy of Escherichia coli O157:H7 outbreaks.</title>
        <authorList>
            <person name="Eppinger M."/>
            <person name="Mammel M.K."/>
            <person name="Leclerc J.E."/>
            <person name="Ravel J."/>
            <person name="Cebula T.A."/>
        </authorList>
    </citation>
    <scope>NUCLEOTIDE SEQUENCE [LARGE SCALE GENOMIC DNA]</scope>
    <source>
        <strain>EC4115 / EHEC</strain>
    </source>
</reference>
<dbReference type="EMBL" id="CP001164">
    <property type="protein sequence ID" value="ACI34620.1"/>
    <property type="molecule type" value="Genomic_DNA"/>
</dbReference>
<dbReference type="RefSeq" id="WP_000449461.1">
    <property type="nucleotide sequence ID" value="NC_011353.1"/>
</dbReference>
<dbReference type="SMR" id="B5YS44"/>
<dbReference type="KEGG" id="ecf:ECH74115_4472"/>
<dbReference type="HOGENOM" id="CLU_105087_3_0_6"/>
<dbReference type="FunFam" id="2.30.110.10:FF:000003">
    <property type="entry name" value="UPF0306 protein YhbP"/>
    <property type="match status" value="1"/>
</dbReference>
<dbReference type="Gene3D" id="2.30.110.10">
    <property type="entry name" value="Electron Transport, Fmn-binding Protein, Chain A"/>
    <property type="match status" value="1"/>
</dbReference>
<dbReference type="HAMAP" id="MF_00764">
    <property type="entry name" value="UPF0306"/>
    <property type="match status" value="1"/>
</dbReference>
<dbReference type="InterPro" id="IPR012349">
    <property type="entry name" value="Split_barrel_FMN-bd"/>
</dbReference>
<dbReference type="InterPro" id="IPR011194">
    <property type="entry name" value="UPF0306"/>
</dbReference>
<dbReference type="NCBIfam" id="NF002900">
    <property type="entry name" value="PRK03467.1"/>
    <property type="match status" value="1"/>
</dbReference>
<dbReference type="PIRSF" id="PIRSF009554">
    <property type="entry name" value="UCP009554"/>
    <property type="match status" value="1"/>
</dbReference>
<dbReference type="SUPFAM" id="SSF50475">
    <property type="entry name" value="FMN-binding split barrel"/>
    <property type="match status" value="1"/>
</dbReference>
<gene>
    <name evidence="1" type="primary">yhbP</name>
    <name type="ordered locus">ECH74115_4472</name>
</gene>
<accession>B5YS44</accession>